<protein>
    <recommendedName>
        <fullName>Charged multivesicular body protein 2a</fullName>
    </recommendedName>
    <alternativeName>
        <fullName>Chromatin-modifying protein 2a</fullName>
        <shortName>CHMP2a</shortName>
    </alternativeName>
</protein>
<dbReference type="EMBL" id="BC072066">
    <property type="protein sequence ID" value="AAH72066.1"/>
    <property type="molecule type" value="mRNA"/>
</dbReference>
<dbReference type="EMBL" id="BC106618">
    <property type="protein sequence ID" value="AAI06619.1"/>
    <property type="molecule type" value="mRNA"/>
</dbReference>
<dbReference type="RefSeq" id="NP_001085225.1">
    <property type="nucleotide sequence ID" value="NM_001091756.1"/>
</dbReference>
<dbReference type="RefSeq" id="XP_018079949.1">
    <property type="nucleotide sequence ID" value="XM_018224460.1"/>
</dbReference>
<dbReference type="RefSeq" id="XP_018079950.1">
    <property type="nucleotide sequence ID" value="XM_018224461.1"/>
</dbReference>
<dbReference type="SMR" id="Q6IP52"/>
<dbReference type="DNASU" id="432320"/>
<dbReference type="GeneID" id="432320"/>
<dbReference type="KEGG" id="xla:432320"/>
<dbReference type="AGR" id="Xenbase:XB-GENE-6255415"/>
<dbReference type="CTD" id="432320"/>
<dbReference type="Xenbase" id="XB-GENE-6255415">
    <property type="gene designation" value="chmp2a.L"/>
</dbReference>
<dbReference type="OMA" id="KMAKMNQ"/>
<dbReference type="OrthoDB" id="10252926at2759"/>
<dbReference type="Proteomes" id="UP000186698">
    <property type="component" value="Chromosome 7L"/>
</dbReference>
<dbReference type="Bgee" id="432320">
    <property type="expression patterns" value="Expressed in muscle tissue and 19 other cell types or tissues"/>
</dbReference>
<dbReference type="GO" id="GO:0000815">
    <property type="term" value="C:ESCRT III complex"/>
    <property type="evidence" value="ECO:0000318"/>
    <property type="project" value="GO_Central"/>
</dbReference>
<dbReference type="GO" id="GO:0031902">
    <property type="term" value="C:late endosome membrane"/>
    <property type="evidence" value="ECO:0007669"/>
    <property type="project" value="UniProtKB-SubCell"/>
</dbReference>
<dbReference type="GO" id="GO:0005771">
    <property type="term" value="C:multivesicular body"/>
    <property type="evidence" value="ECO:0000318"/>
    <property type="project" value="GO_Central"/>
</dbReference>
<dbReference type="GO" id="GO:0005635">
    <property type="term" value="C:nuclear envelope"/>
    <property type="evidence" value="ECO:0000250"/>
    <property type="project" value="UniProtKB"/>
</dbReference>
<dbReference type="GO" id="GO:0032509">
    <property type="term" value="P:endosome transport via multivesicular body sorting pathway"/>
    <property type="evidence" value="ECO:0000318"/>
    <property type="project" value="GO_Central"/>
</dbReference>
<dbReference type="GO" id="GO:0010458">
    <property type="term" value="P:exit from mitosis"/>
    <property type="evidence" value="ECO:0000250"/>
    <property type="project" value="UniProtKB"/>
</dbReference>
<dbReference type="GO" id="GO:0045324">
    <property type="term" value="P:late endosome to vacuole transport"/>
    <property type="evidence" value="ECO:0000318"/>
    <property type="project" value="GO_Central"/>
</dbReference>
<dbReference type="GO" id="GO:0031468">
    <property type="term" value="P:nuclear membrane reassembly"/>
    <property type="evidence" value="ECO:0000250"/>
    <property type="project" value="UniProtKB"/>
</dbReference>
<dbReference type="GO" id="GO:0015031">
    <property type="term" value="P:protein transport"/>
    <property type="evidence" value="ECO:0000318"/>
    <property type="project" value="GO_Central"/>
</dbReference>
<dbReference type="Gene3D" id="6.10.140.1230">
    <property type="match status" value="1"/>
</dbReference>
<dbReference type="InterPro" id="IPR005024">
    <property type="entry name" value="Snf7_fam"/>
</dbReference>
<dbReference type="PANTHER" id="PTHR10476">
    <property type="entry name" value="CHARGED MULTIVESICULAR BODY PROTEIN"/>
    <property type="match status" value="1"/>
</dbReference>
<dbReference type="Pfam" id="PF03357">
    <property type="entry name" value="Snf7"/>
    <property type="match status" value="1"/>
</dbReference>
<accession>Q6IP52</accession>
<accession>Q3KPQ0</accession>
<organism>
    <name type="scientific">Xenopus laevis</name>
    <name type="common">African clawed frog</name>
    <dbReference type="NCBI Taxonomy" id="8355"/>
    <lineage>
        <taxon>Eukaryota</taxon>
        <taxon>Metazoa</taxon>
        <taxon>Chordata</taxon>
        <taxon>Craniata</taxon>
        <taxon>Vertebrata</taxon>
        <taxon>Euteleostomi</taxon>
        <taxon>Amphibia</taxon>
        <taxon>Batrachia</taxon>
        <taxon>Anura</taxon>
        <taxon>Pipoidea</taxon>
        <taxon>Pipidae</taxon>
        <taxon>Xenopodinae</taxon>
        <taxon>Xenopus</taxon>
        <taxon>Xenopus</taxon>
    </lineage>
</organism>
<keyword id="KW-0175">Coiled coil</keyword>
<keyword id="KW-0963">Cytoplasm</keyword>
<keyword id="KW-0967">Endosome</keyword>
<keyword id="KW-0472">Membrane</keyword>
<keyword id="KW-0653">Protein transport</keyword>
<keyword id="KW-1185">Reference proteome</keyword>
<keyword id="KW-0813">Transport</keyword>
<evidence type="ECO:0000250" key="1"/>
<evidence type="ECO:0000255" key="2"/>
<evidence type="ECO:0000256" key="3">
    <source>
        <dbReference type="SAM" id="MobiDB-lite"/>
    </source>
</evidence>
<evidence type="ECO:0000305" key="4"/>
<comment type="function">
    <text evidence="1">Probable core component of the endosomal sorting required for transport complex III (ESCRT-III) which is involved in multivesicular bodies (MVBs) formation and sorting of endosomal cargo proteins into MVBs. MVBs contain intraluminal vesicles (ILVs) that are generated by invagination and scission from the limiting membrane of the endosome and mostly are delivered to lysosomes enabling degradation of membrane proteins, such as stimulated growth factor receptors, lysosomal enzymes and lipids (By similarity).</text>
</comment>
<comment type="subunit">
    <text evidence="1">Probable core component of the endosomal sorting required for transport complex III (ESCRT-III). ESCRT-III components are thought to multimerize to form a flat lattice on the perimeter membrane of the endosome (By similarity).</text>
</comment>
<comment type="subcellular location">
    <subcellularLocation>
        <location evidence="1">Late endosome membrane</location>
        <topology evidence="1">Peripheral membrane protein</topology>
        <orientation evidence="1">Cytoplasmic side</orientation>
    </subcellularLocation>
    <subcellularLocation>
        <location evidence="1">Cytoplasm</location>
    </subcellularLocation>
</comment>
<comment type="similarity">
    <text evidence="4">Belongs to the SNF7 family.</text>
</comment>
<reference key="1">
    <citation type="submission" date="2005-10" db="EMBL/GenBank/DDBJ databases">
        <authorList>
            <consortium name="NIH - Xenopus Gene Collection (XGC) project"/>
        </authorList>
    </citation>
    <scope>NUCLEOTIDE SEQUENCE [LARGE SCALE MRNA]</scope>
    <source>
        <tissue>Oocyte</tissue>
    </source>
</reference>
<gene>
    <name type="primary">chmp2a</name>
</gene>
<sequence>MEFLFGRRKTPEELLRQNQRALNRAMRELDRERQKLEQQEKKIIADIKKMAKQGQMDAVKIMAKDLVRTRRYVKKFIMMRANIQAVSLKIQTLKSNNSMAQAMKGVTKAMATMNRQLKLPQIQKIMMEFEKQSEIMDMKEEMMNDAIDDAMGDEDDEEESDAVVSQVLDELGLTLTDELSNLPSTGGSLSVAGAKKGEATAALADADADLEERLNNLRRD</sequence>
<proteinExistence type="evidence at transcript level"/>
<name>CHM2A_XENLA</name>
<feature type="chain" id="PRO_0000211466" description="Charged multivesicular body protein 2a">
    <location>
        <begin position="1"/>
        <end position="220"/>
    </location>
</feature>
<feature type="region of interest" description="Disordered" evidence="3">
    <location>
        <begin position="196"/>
        <end position="220"/>
    </location>
</feature>
<feature type="coiled-coil region" evidence="2">
    <location>
        <begin position="12"/>
        <end position="53"/>
    </location>
</feature>
<feature type="coiled-coil region" evidence="2">
    <location>
        <begin position="198"/>
        <end position="219"/>
    </location>
</feature>
<feature type="short sequence motif" description="MIT-interacting motif">
    <location>
        <begin position="208"/>
        <end position="218"/>
    </location>
</feature>
<feature type="compositionally biased region" description="Basic and acidic residues" evidence="3">
    <location>
        <begin position="211"/>
        <end position="220"/>
    </location>
</feature>